<sequence>MHYTATVLLAFGMSMDAFAASIGKGATLHKPKFSEALRTGLIFGAVETLTPLIGWGLGILASKFVLEWNHWIAFVLLIFLGGRMIIEGIRGGSDEDETPLRRHSFWLLVTTAIATSLDAMAVGVGLAFLQVNIIATALAIGCATLIMSTLGMMIGRFIGPMLGKRAEILGGVVLIGIGVQILWTHFHG</sequence>
<reference key="1">
    <citation type="journal article" date="2011" name="J. Bacteriol.">
        <title>Comparative genomics of 28 Salmonella enterica isolates: evidence for CRISPR-mediated adaptive sublineage evolution.</title>
        <authorList>
            <person name="Fricke W.F."/>
            <person name="Mammel M.K."/>
            <person name="McDermott P.F."/>
            <person name="Tartera C."/>
            <person name="White D.G."/>
            <person name="Leclerc J.E."/>
            <person name="Ravel J."/>
            <person name="Cebula T.A."/>
        </authorList>
    </citation>
    <scope>NUCLEOTIDE SEQUENCE [LARGE SCALE GENOMIC DNA]</scope>
    <source>
        <strain>SL476</strain>
    </source>
</reference>
<protein>
    <recommendedName>
        <fullName evidence="1">Probable manganese efflux pump MntP</fullName>
    </recommendedName>
</protein>
<accession>B4TKG5</accession>
<gene>
    <name evidence="1" type="primary">mntP</name>
    <name type="synonym">yebN</name>
    <name type="ordered locus">SeHA_C2035</name>
</gene>
<comment type="function">
    <text evidence="1">Probably functions as a manganese efflux pump.</text>
</comment>
<comment type="subcellular location">
    <subcellularLocation>
        <location evidence="1">Cell inner membrane</location>
        <topology evidence="1">Multi-pass membrane protein</topology>
    </subcellularLocation>
</comment>
<comment type="similarity">
    <text evidence="1">Belongs to the MntP (TC 9.B.29) family.</text>
</comment>
<proteinExistence type="inferred from homology"/>
<dbReference type="EMBL" id="CP001120">
    <property type="protein sequence ID" value="ACF68915.1"/>
    <property type="molecule type" value="Genomic_DNA"/>
</dbReference>
<dbReference type="RefSeq" id="WP_001531552.1">
    <property type="nucleotide sequence ID" value="NC_011083.1"/>
</dbReference>
<dbReference type="KEGG" id="seh:SeHA_C2035"/>
<dbReference type="HOGENOM" id="CLU_096410_0_0_6"/>
<dbReference type="Proteomes" id="UP000001866">
    <property type="component" value="Chromosome"/>
</dbReference>
<dbReference type="GO" id="GO:0005886">
    <property type="term" value="C:plasma membrane"/>
    <property type="evidence" value="ECO:0007669"/>
    <property type="project" value="UniProtKB-SubCell"/>
</dbReference>
<dbReference type="GO" id="GO:0005384">
    <property type="term" value="F:manganese ion transmembrane transporter activity"/>
    <property type="evidence" value="ECO:0007669"/>
    <property type="project" value="UniProtKB-UniRule"/>
</dbReference>
<dbReference type="HAMAP" id="MF_01521">
    <property type="entry name" value="MntP_pump"/>
    <property type="match status" value="1"/>
</dbReference>
<dbReference type="InterPro" id="IPR003810">
    <property type="entry name" value="Mntp/YtaF"/>
</dbReference>
<dbReference type="InterPro" id="IPR022929">
    <property type="entry name" value="Put_MntP"/>
</dbReference>
<dbReference type="NCBIfam" id="NF008546">
    <property type="entry name" value="PRK11469.1"/>
    <property type="match status" value="1"/>
</dbReference>
<dbReference type="PANTHER" id="PTHR35529">
    <property type="entry name" value="MANGANESE EFFLUX PUMP MNTP-RELATED"/>
    <property type="match status" value="1"/>
</dbReference>
<dbReference type="PANTHER" id="PTHR35529:SF1">
    <property type="entry name" value="MANGANESE EFFLUX PUMP MNTP-RELATED"/>
    <property type="match status" value="1"/>
</dbReference>
<dbReference type="Pfam" id="PF02659">
    <property type="entry name" value="Mntp"/>
    <property type="match status" value="1"/>
</dbReference>
<keyword id="KW-0997">Cell inner membrane</keyword>
<keyword id="KW-1003">Cell membrane</keyword>
<keyword id="KW-0406">Ion transport</keyword>
<keyword id="KW-0464">Manganese</keyword>
<keyword id="KW-0472">Membrane</keyword>
<keyword id="KW-0812">Transmembrane</keyword>
<keyword id="KW-1133">Transmembrane helix</keyword>
<keyword id="KW-0813">Transport</keyword>
<organism>
    <name type="scientific">Salmonella heidelberg (strain SL476)</name>
    <dbReference type="NCBI Taxonomy" id="454169"/>
    <lineage>
        <taxon>Bacteria</taxon>
        <taxon>Pseudomonadati</taxon>
        <taxon>Pseudomonadota</taxon>
        <taxon>Gammaproteobacteria</taxon>
        <taxon>Enterobacterales</taxon>
        <taxon>Enterobacteriaceae</taxon>
        <taxon>Salmonella</taxon>
    </lineage>
</organism>
<evidence type="ECO:0000255" key="1">
    <source>
        <dbReference type="HAMAP-Rule" id="MF_01521"/>
    </source>
</evidence>
<feature type="chain" id="PRO_1000200039" description="Probable manganese efflux pump MntP">
    <location>
        <begin position="1"/>
        <end position="188"/>
    </location>
</feature>
<feature type="transmembrane region" description="Helical" evidence="1">
    <location>
        <begin position="3"/>
        <end position="23"/>
    </location>
</feature>
<feature type="transmembrane region" description="Helical" evidence="1">
    <location>
        <begin position="41"/>
        <end position="61"/>
    </location>
</feature>
<feature type="transmembrane region" description="Helical" evidence="1">
    <location>
        <begin position="66"/>
        <end position="86"/>
    </location>
</feature>
<feature type="transmembrane region" description="Helical" evidence="1">
    <location>
        <begin position="106"/>
        <end position="128"/>
    </location>
</feature>
<feature type="transmembrane region" description="Helical" evidence="1">
    <location>
        <begin position="143"/>
        <end position="163"/>
    </location>
</feature>
<feature type="transmembrane region" description="Helical" evidence="1">
    <location>
        <begin position="168"/>
        <end position="188"/>
    </location>
</feature>
<name>MNTP_SALHS</name>